<sequence length="86" mass="9940">MVVIRLSRAGAKKRPFYHMVVTDSRKRRDGNYIERIGYFNPVARGQEVKLHIDMDKMTHWQKVGAQLSDRVSALLKEHSKKSETAA</sequence>
<reference key="1">
    <citation type="journal article" date="2004" name="Nat. Genet.">
        <title>Evidence in the Legionella pneumophila genome for exploitation of host cell functions and high genome plasticity.</title>
        <authorList>
            <person name="Cazalet C."/>
            <person name="Rusniok C."/>
            <person name="Brueggemann H."/>
            <person name="Zidane N."/>
            <person name="Magnier A."/>
            <person name="Ma L."/>
            <person name="Tichit M."/>
            <person name="Jarraud S."/>
            <person name="Bouchier C."/>
            <person name="Vandenesch F."/>
            <person name="Kunst F."/>
            <person name="Etienne J."/>
            <person name="Glaser P."/>
            <person name="Buchrieser C."/>
        </authorList>
    </citation>
    <scope>NUCLEOTIDE SEQUENCE [LARGE SCALE GENOMIC DNA]</scope>
    <source>
        <strain>Paris</strain>
    </source>
</reference>
<gene>
    <name evidence="1" type="primary">rpsP</name>
    <name type="ordered locus">lpp0466</name>
</gene>
<organism>
    <name type="scientific">Legionella pneumophila (strain Paris)</name>
    <dbReference type="NCBI Taxonomy" id="297246"/>
    <lineage>
        <taxon>Bacteria</taxon>
        <taxon>Pseudomonadati</taxon>
        <taxon>Pseudomonadota</taxon>
        <taxon>Gammaproteobacteria</taxon>
        <taxon>Legionellales</taxon>
        <taxon>Legionellaceae</taxon>
        <taxon>Legionella</taxon>
    </lineage>
</organism>
<feature type="chain" id="PRO_0000243820" description="Small ribosomal subunit protein bS16">
    <location>
        <begin position="1"/>
        <end position="86"/>
    </location>
</feature>
<name>RS16_LEGPA</name>
<evidence type="ECO:0000255" key="1">
    <source>
        <dbReference type="HAMAP-Rule" id="MF_00385"/>
    </source>
</evidence>
<evidence type="ECO:0000305" key="2"/>
<protein>
    <recommendedName>
        <fullName evidence="1">Small ribosomal subunit protein bS16</fullName>
    </recommendedName>
    <alternativeName>
        <fullName evidence="2">30S ribosomal protein S16</fullName>
    </alternativeName>
</protein>
<dbReference type="EMBL" id="CR628336">
    <property type="protein sequence ID" value="CAH11614.1"/>
    <property type="molecule type" value="Genomic_DNA"/>
</dbReference>
<dbReference type="RefSeq" id="WP_010946148.1">
    <property type="nucleotide sequence ID" value="NC_006368.1"/>
</dbReference>
<dbReference type="SMR" id="Q5X7Y9"/>
<dbReference type="GeneID" id="57034402"/>
<dbReference type="KEGG" id="lpp:lpp0466"/>
<dbReference type="LegioList" id="lpp0466"/>
<dbReference type="HOGENOM" id="CLU_100590_5_1_6"/>
<dbReference type="GO" id="GO:0005737">
    <property type="term" value="C:cytoplasm"/>
    <property type="evidence" value="ECO:0007669"/>
    <property type="project" value="UniProtKB-ARBA"/>
</dbReference>
<dbReference type="GO" id="GO:0015935">
    <property type="term" value="C:small ribosomal subunit"/>
    <property type="evidence" value="ECO:0007669"/>
    <property type="project" value="TreeGrafter"/>
</dbReference>
<dbReference type="GO" id="GO:0003735">
    <property type="term" value="F:structural constituent of ribosome"/>
    <property type="evidence" value="ECO:0007669"/>
    <property type="project" value="InterPro"/>
</dbReference>
<dbReference type="GO" id="GO:0006412">
    <property type="term" value="P:translation"/>
    <property type="evidence" value="ECO:0007669"/>
    <property type="project" value="UniProtKB-UniRule"/>
</dbReference>
<dbReference type="Gene3D" id="3.30.1320.10">
    <property type="match status" value="1"/>
</dbReference>
<dbReference type="HAMAP" id="MF_00385">
    <property type="entry name" value="Ribosomal_bS16"/>
    <property type="match status" value="1"/>
</dbReference>
<dbReference type="InterPro" id="IPR000307">
    <property type="entry name" value="Ribosomal_bS16"/>
</dbReference>
<dbReference type="InterPro" id="IPR020592">
    <property type="entry name" value="Ribosomal_bS16_CS"/>
</dbReference>
<dbReference type="InterPro" id="IPR023803">
    <property type="entry name" value="Ribosomal_bS16_dom_sf"/>
</dbReference>
<dbReference type="NCBIfam" id="TIGR00002">
    <property type="entry name" value="S16"/>
    <property type="match status" value="1"/>
</dbReference>
<dbReference type="PANTHER" id="PTHR12919">
    <property type="entry name" value="30S RIBOSOMAL PROTEIN S16"/>
    <property type="match status" value="1"/>
</dbReference>
<dbReference type="PANTHER" id="PTHR12919:SF20">
    <property type="entry name" value="SMALL RIBOSOMAL SUBUNIT PROTEIN BS16M"/>
    <property type="match status" value="1"/>
</dbReference>
<dbReference type="Pfam" id="PF00886">
    <property type="entry name" value="Ribosomal_S16"/>
    <property type="match status" value="1"/>
</dbReference>
<dbReference type="SUPFAM" id="SSF54565">
    <property type="entry name" value="Ribosomal protein S16"/>
    <property type="match status" value="1"/>
</dbReference>
<dbReference type="PROSITE" id="PS00732">
    <property type="entry name" value="RIBOSOMAL_S16"/>
    <property type="match status" value="1"/>
</dbReference>
<accession>Q5X7Y9</accession>
<keyword id="KW-0687">Ribonucleoprotein</keyword>
<keyword id="KW-0689">Ribosomal protein</keyword>
<comment type="similarity">
    <text evidence="1">Belongs to the bacterial ribosomal protein bS16 family.</text>
</comment>
<proteinExistence type="inferred from homology"/>